<reference key="1">
    <citation type="journal article" date="2006" name="J. Bacteriol.">
        <title>Living with genome instability: the adaptation of phytoplasmas to diverse environments of their insect and plant hosts.</title>
        <authorList>
            <person name="Bai X."/>
            <person name="Zhang J."/>
            <person name="Ewing A."/>
            <person name="Miller S.A."/>
            <person name="Jancso Radek A."/>
            <person name="Shevchenko D.V."/>
            <person name="Tsukerman K."/>
            <person name="Walunas T."/>
            <person name="Lapidus A."/>
            <person name="Campbell J.W."/>
            <person name="Hogenhout S.A."/>
        </authorList>
    </citation>
    <scope>NUCLEOTIDE SEQUENCE [LARGE SCALE GENOMIC DNA]</scope>
    <source>
        <strain>AYWB</strain>
    </source>
</reference>
<proteinExistence type="inferred from homology"/>
<dbReference type="EC" id="3.1.26.3" evidence="1"/>
<dbReference type="EMBL" id="CP000061">
    <property type="protein sequence ID" value="ABC65260.1"/>
    <property type="molecule type" value="Genomic_DNA"/>
</dbReference>
<dbReference type="RefSeq" id="WP_011412426.1">
    <property type="nucleotide sequence ID" value="NC_007716.1"/>
</dbReference>
<dbReference type="SMR" id="Q2NJY3"/>
<dbReference type="STRING" id="322098.AYWB_143"/>
<dbReference type="KEGG" id="ayw:AYWB_143"/>
<dbReference type="eggNOG" id="COG0571">
    <property type="taxonomic scope" value="Bacteria"/>
</dbReference>
<dbReference type="HOGENOM" id="CLU_000907_1_3_14"/>
<dbReference type="OrthoDB" id="9805026at2"/>
<dbReference type="PhylomeDB" id="Q2NJY3"/>
<dbReference type="Proteomes" id="UP000001934">
    <property type="component" value="Chromosome"/>
</dbReference>
<dbReference type="GO" id="GO:0005737">
    <property type="term" value="C:cytoplasm"/>
    <property type="evidence" value="ECO:0007669"/>
    <property type="project" value="UniProtKB-SubCell"/>
</dbReference>
<dbReference type="GO" id="GO:0003725">
    <property type="term" value="F:double-stranded RNA binding"/>
    <property type="evidence" value="ECO:0007669"/>
    <property type="project" value="TreeGrafter"/>
</dbReference>
<dbReference type="GO" id="GO:0046872">
    <property type="term" value="F:metal ion binding"/>
    <property type="evidence" value="ECO:0007669"/>
    <property type="project" value="UniProtKB-KW"/>
</dbReference>
<dbReference type="GO" id="GO:0004525">
    <property type="term" value="F:ribonuclease III activity"/>
    <property type="evidence" value="ECO:0007669"/>
    <property type="project" value="UniProtKB-UniRule"/>
</dbReference>
<dbReference type="GO" id="GO:0019843">
    <property type="term" value="F:rRNA binding"/>
    <property type="evidence" value="ECO:0007669"/>
    <property type="project" value="UniProtKB-KW"/>
</dbReference>
<dbReference type="GO" id="GO:0006397">
    <property type="term" value="P:mRNA processing"/>
    <property type="evidence" value="ECO:0007669"/>
    <property type="project" value="UniProtKB-UniRule"/>
</dbReference>
<dbReference type="GO" id="GO:0010468">
    <property type="term" value="P:regulation of gene expression"/>
    <property type="evidence" value="ECO:0007669"/>
    <property type="project" value="TreeGrafter"/>
</dbReference>
<dbReference type="GO" id="GO:0006364">
    <property type="term" value="P:rRNA processing"/>
    <property type="evidence" value="ECO:0007669"/>
    <property type="project" value="UniProtKB-UniRule"/>
</dbReference>
<dbReference type="GO" id="GO:0008033">
    <property type="term" value="P:tRNA processing"/>
    <property type="evidence" value="ECO:0007669"/>
    <property type="project" value="UniProtKB-KW"/>
</dbReference>
<dbReference type="CDD" id="cd10845">
    <property type="entry name" value="DSRM_RNAse_III_family"/>
    <property type="match status" value="1"/>
</dbReference>
<dbReference type="CDD" id="cd00593">
    <property type="entry name" value="RIBOc"/>
    <property type="match status" value="1"/>
</dbReference>
<dbReference type="FunFam" id="1.10.1520.10:FF:000001">
    <property type="entry name" value="Ribonuclease 3"/>
    <property type="match status" value="1"/>
</dbReference>
<dbReference type="FunFam" id="3.30.160.20:FF:000003">
    <property type="entry name" value="Ribonuclease 3"/>
    <property type="match status" value="1"/>
</dbReference>
<dbReference type="Gene3D" id="3.30.160.20">
    <property type="match status" value="1"/>
</dbReference>
<dbReference type="Gene3D" id="1.10.1520.10">
    <property type="entry name" value="Ribonuclease III domain"/>
    <property type="match status" value="1"/>
</dbReference>
<dbReference type="HAMAP" id="MF_00104">
    <property type="entry name" value="RNase_III"/>
    <property type="match status" value="1"/>
</dbReference>
<dbReference type="InterPro" id="IPR014720">
    <property type="entry name" value="dsRBD_dom"/>
</dbReference>
<dbReference type="InterPro" id="IPR011907">
    <property type="entry name" value="RNase_III"/>
</dbReference>
<dbReference type="InterPro" id="IPR000999">
    <property type="entry name" value="RNase_III_dom"/>
</dbReference>
<dbReference type="InterPro" id="IPR036389">
    <property type="entry name" value="RNase_III_sf"/>
</dbReference>
<dbReference type="NCBIfam" id="TIGR02191">
    <property type="entry name" value="RNaseIII"/>
    <property type="match status" value="1"/>
</dbReference>
<dbReference type="PANTHER" id="PTHR11207:SF0">
    <property type="entry name" value="RIBONUCLEASE 3"/>
    <property type="match status" value="1"/>
</dbReference>
<dbReference type="PANTHER" id="PTHR11207">
    <property type="entry name" value="RIBONUCLEASE III"/>
    <property type="match status" value="1"/>
</dbReference>
<dbReference type="Pfam" id="PF00035">
    <property type="entry name" value="dsrm"/>
    <property type="match status" value="1"/>
</dbReference>
<dbReference type="Pfam" id="PF14622">
    <property type="entry name" value="Ribonucleas_3_3"/>
    <property type="match status" value="1"/>
</dbReference>
<dbReference type="SMART" id="SM00358">
    <property type="entry name" value="DSRM"/>
    <property type="match status" value="1"/>
</dbReference>
<dbReference type="SMART" id="SM00535">
    <property type="entry name" value="RIBOc"/>
    <property type="match status" value="1"/>
</dbReference>
<dbReference type="SUPFAM" id="SSF54768">
    <property type="entry name" value="dsRNA-binding domain-like"/>
    <property type="match status" value="1"/>
</dbReference>
<dbReference type="SUPFAM" id="SSF69065">
    <property type="entry name" value="RNase III domain-like"/>
    <property type="match status" value="1"/>
</dbReference>
<dbReference type="PROSITE" id="PS50137">
    <property type="entry name" value="DS_RBD"/>
    <property type="match status" value="1"/>
</dbReference>
<dbReference type="PROSITE" id="PS00517">
    <property type="entry name" value="RNASE_3_1"/>
    <property type="match status" value="1"/>
</dbReference>
<dbReference type="PROSITE" id="PS50142">
    <property type="entry name" value="RNASE_3_2"/>
    <property type="match status" value="1"/>
</dbReference>
<comment type="function">
    <text evidence="1">Digests double-stranded RNA. Involved in the processing of primary rRNA transcript to yield the immediate precursors to the large and small rRNAs (23S and 16S). Processes some mRNAs, and tRNAs when they are encoded in the rRNA operon. Processes pre-crRNA and tracrRNA of type II CRISPR loci if present in the organism.</text>
</comment>
<comment type="catalytic activity">
    <reaction evidence="1">
        <text>Endonucleolytic cleavage to 5'-phosphomonoester.</text>
        <dbReference type="EC" id="3.1.26.3"/>
    </reaction>
</comment>
<comment type="cofactor">
    <cofactor evidence="1">
        <name>Mg(2+)</name>
        <dbReference type="ChEBI" id="CHEBI:18420"/>
    </cofactor>
</comment>
<comment type="subunit">
    <text evidence="1">Homodimer.</text>
</comment>
<comment type="subcellular location">
    <subcellularLocation>
        <location evidence="1">Cytoplasm</location>
    </subcellularLocation>
</comment>
<comment type="similarity">
    <text evidence="1">Belongs to the ribonuclease III family.</text>
</comment>
<keyword id="KW-0963">Cytoplasm</keyword>
<keyword id="KW-0255">Endonuclease</keyword>
<keyword id="KW-0378">Hydrolase</keyword>
<keyword id="KW-0460">Magnesium</keyword>
<keyword id="KW-0479">Metal-binding</keyword>
<keyword id="KW-0507">mRNA processing</keyword>
<keyword id="KW-0540">Nuclease</keyword>
<keyword id="KW-0694">RNA-binding</keyword>
<keyword id="KW-0698">rRNA processing</keyword>
<keyword id="KW-0699">rRNA-binding</keyword>
<keyword id="KW-0819">tRNA processing</keyword>
<feature type="chain" id="PRO_1000075721" description="Ribonuclease 3">
    <location>
        <begin position="1"/>
        <end position="237"/>
    </location>
</feature>
<feature type="domain" description="RNase III" evidence="1">
    <location>
        <begin position="4"/>
        <end position="130"/>
    </location>
</feature>
<feature type="domain" description="DRBM" evidence="1">
    <location>
        <begin position="154"/>
        <end position="222"/>
    </location>
</feature>
<feature type="active site" evidence="1">
    <location>
        <position position="49"/>
    </location>
</feature>
<feature type="active site" evidence="1">
    <location>
        <position position="119"/>
    </location>
</feature>
<feature type="binding site" evidence="1">
    <location>
        <position position="45"/>
    </location>
    <ligand>
        <name>Mg(2+)</name>
        <dbReference type="ChEBI" id="CHEBI:18420"/>
    </ligand>
</feature>
<feature type="binding site" evidence="1">
    <location>
        <position position="116"/>
    </location>
    <ligand>
        <name>Mg(2+)</name>
        <dbReference type="ChEBI" id="CHEBI:18420"/>
    </ligand>
</feature>
<feature type="binding site" evidence="1">
    <location>
        <position position="119"/>
    </location>
    <ligand>
        <name>Mg(2+)</name>
        <dbReference type="ChEBI" id="CHEBI:18420"/>
    </ligand>
</feature>
<evidence type="ECO:0000255" key="1">
    <source>
        <dbReference type="HAMAP-Rule" id="MF_00104"/>
    </source>
</evidence>
<name>RNC_AYWBP</name>
<gene>
    <name evidence="1" type="primary">rnc</name>
    <name type="ordered locus">AYWB_143</name>
</gene>
<sequence>MKNIQILFQTLNIFPKNLVLYKQALTHSSYSNEQTPPQEDNERLEFLGDAIVGLLMADYLYSQSKEDEGIMTKKRAQAVCEKSLTIYAQKIELQNYLLLGKGEKNKDFNAKGIMADTFEALFGAIYLDLGYLTAKKVFHNIVLPHLAKTIYIIDFKTQLQEIVQSEKKTIQYKIVQEQGPAHSKNFVAEVYLEKNLLGTGEGSTKKSAEQKAAQQALSKVAKTKDLIKNKGVKEKEL</sequence>
<organism>
    <name type="scientific">Aster yellows witches'-broom phytoplasma (strain AYWB)</name>
    <dbReference type="NCBI Taxonomy" id="322098"/>
    <lineage>
        <taxon>Bacteria</taxon>
        <taxon>Bacillati</taxon>
        <taxon>Mycoplasmatota</taxon>
        <taxon>Mollicutes</taxon>
        <taxon>Acholeplasmatales</taxon>
        <taxon>Acholeplasmataceae</taxon>
        <taxon>Candidatus Phytoplasma</taxon>
        <taxon>16SrI (Aster yellows group)</taxon>
    </lineage>
</organism>
<protein>
    <recommendedName>
        <fullName evidence="1">Ribonuclease 3</fullName>
        <ecNumber evidence="1">3.1.26.3</ecNumber>
    </recommendedName>
    <alternativeName>
        <fullName evidence="1">Ribonuclease III</fullName>
        <shortName evidence="1">RNase III</shortName>
    </alternativeName>
</protein>
<accession>Q2NJY3</accession>